<keyword id="KW-1185">Reference proteome</keyword>
<sequence>MEHIQKGIAGEQKACAFLEQQGYKIIEKNLRIGKGEIDLIAVHNNCMCFIEVKYRKHNRYGFPEEFVTQKKLLKIQETAEAYIYTVNWQGRIRFDVVAITGEELPVHLMDVTL</sequence>
<evidence type="ECO:0000255" key="1">
    <source>
        <dbReference type="HAMAP-Rule" id="MF_00048"/>
    </source>
</evidence>
<gene>
    <name type="ordered locus">CHU_0465</name>
</gene>
<name>Y465_CYTH3</name>
<feature type="chain" id="PRO_0000336165" description="UPF0102 protein CHU_0465">
    <location>
        <begin position="1"/>
        <end position="113"/>
    </location>
</feature>
<reference key="1">
    <citation type="journal article" date="2007" name="Appl. Environ. Microbiol.">
        <title>Genome sequence of the cellulolytic gliding bacterium Cytophaga hutchinsonii.</title>
        <authorList>
            <person name="Xie G."/>
            <person name="Bruce D.C."/>
            <person name="Challacombe J.F."/>
            <person name="Chertkov O."/>
            <person name="Detter J.C."/>
            <person name="Gilna P."/>
            <person name="Han C.S."/>
            <person name="Lucas S."/>
            <person name="Misra M."/>
            <person name="Myers G.L."/>
            <person name="Richardson P."/>
            <person name="Tapia R."/>
            <person name="Thayer N."/>
            <person name="Thompson L.S."/>
            <person name="Brettin T.S."/>
            <person name="Henrissat B."/>
            <person name="Wilson D.B."/>
            <person name="McBride M.J."/>
        </authorList>
    </citation>
    <scope>NUCLEOTIDE SEQUENCE [LARGE SCALE GENOMIC DNA]</scope>
    <source>
        <strain>ATCC 33406 / DSM 1761 / JCM 20678 / CIP 103989 / IAM 12607 / NBRC 15051 / NCIMB 9469 / D465</strain>
    </source>
</reference>
<dbReference type="EMBL" id="CP000383">
    <property type="protein sequence ID" value="ABG57375.1"/>
    <property type="molecule type" value="Genomic_DNA"/>
</dbReference>
<dbReference type="RefSeq" id="WP_011583871.1">
    <property type="nucleotide sequence ID" value="NC_008255.1"/>
</dbReference>
<dbReference type="SMR" id="Q11XW1"/>
<dbReference type="STRING" id="269798.CHU_0465"/>
<dbReference type="DNASU" id="4185990"/>
<dbReference type="KEGG" id="chu:CHU_0465"/>
<dbReference type="eggNOG" id="COG0792">
    <property type="taxonomic scope" value="Bacteria"/>
</dbReference>
<dbReference type="HOGENOM" id="CLU_115353_3_1_10"/>
<dbReference type="OrthoDB" id="9802516at2"/>
<dbReference type="Proteomes" id="UP000001822">
    <property type="component" value="Chromosome"/>
</dbReference>
<dbReference type="GO" id="GO:0003676">
    <property type="term" value="F:nucleic acid binding"/>
    <property type="evidence" value="ECO:0007669"/>
    <property type="project" value="InterPro"/>
</dbReference>
<dbReference type="CDD" id="cd20736">
    <property type="entry name" value="PoNe_Nuclease"/>
    <property type="match status" value="1"/>
</dbReference>
<dbReference type="Gene3D" id="3.40.1350.10">
    <property type="match status" value="1"/>
</dbReference>
<dbReference type="HAMAP" id="MF_00048">
    <property type="entry name" value="UPF0102"/>
    <property type="match status" value="1"/>
</dbReference>
<dbReference type="InterPro" id="IPR011335">
    <property type="entry name" value="Restrct_endonuc-II-like"/>
</dbReference>
<dbReference type="InterPro" id="IPR011856">
    <property type="entry name" value="tRNA_endonuc-like_dom_sf"/>
</dbReference>
<dbReference type="InterPro" id="IPR003509">
    <property type="entry name" value="UPF0102_YraN-like"/>
</dbReference>
<dbReference type="NCBIfam" id="NF009150">
    <property type="entry name" value="PRK12497.1-3"/>
    <property type="match status" value="1"/>
</dbReference>
<dbReference type="NCBIfam" id="TIGR00252">
    <property type="entry name" value="YraN family protein"/>
    <property type="match status" value="1"/>
</dbReference>
<dbReference type="PANTHER" id="PTHR34039">
    <property type="entry name" value="UPF0102 PROTEIN YRAN"/>
    <property type="match status" value="1"/>
</dbReference>
<dbReference type="PANTHER" id="PTHR34039:SF1">
    <property type="entry name" value="UPF0102 PROTEIN YRAN"/>
    <property type="match status" value="1"/>
</dbReference>
<dbReference type="Pfam" id="PF02021">
    <property type="entry name" value="UPF0102"/>
    <property type="match status" value="1"/>
</dbReference>
<dbReference type="SUPFAM" id="SSF52980">
    <property type="entry name" value="Restriction endonuclease-like"/>
    <property type="match status" value="1"/>
</dbReference>
<comment type="similarity">
    <text evidence="1">Belongs to the UPF0102 family.</text>
</comment>
<organism>
    <name type="scientific">Cytophaga hutchinsonii (strain ATCC 33406 / DSM 1761 / CIP 103989 / NBRC 15051 / NCIMB 9469 / D465)</name>
    <dbReference type="NCBI Taxonomy" id="269798"/>
    <lineage>
        <taxon>Bacteria</taxon>
        <taxon>Pseudomonadati</taxon>
        <taxon>Bacteroidota</taxon>
        <taxon>Cytophagia</taxon>
        <taxon>Cytophagales</taxon>
        <taxon>Cytophagaceae</taxon>
        <taxon>Cytophaga</taxon>
    </lineage>
</organism>
<accession>Q11XW1</accession>
<protein>
    <recommendedName>
        <fullName evidence="1">UPF0102 protein CHU_0465</fullName>
    </recommendedName>
</protein>
<proteinExistence type="inferred from homology"/>